<name>AP2S1_PONAB</name>
<accession>Q5R940</accession>
<sequence>MIRFILIQNRAGKTRLAKWYMQFDDDEKQKLIEEVHAVVTVRDAKHTNFVEFRNFKIIYRRYAGLYFCICVDVNDNNLAYLEAIHNFVEVLNEYFHNVCELDLVFNFYKVYTVVDEMFLAGEIRETSQTKVLKQLLMLQSLE</sequence>
<gene>
    <name type="primary">AP2S1</name>
</gene>
<comment type="function">
    <text evidence="1">Component of the adaptor protein complex 2 (AP-2). Adaptor protein complexes function in protein Transport via Transport vesicles in different membrane traffic pathways. Adaptor protein complexes are vesicle coat components and appear to be involved in cargo selection and vesicle formation. AP-2 is involved in clathrin-dependent endocytosis in which cargo proteins are incorporated into vesicles surrounded by clathrin (clathrin-coated vesicles, CCVs) which are destined for fusion with the early endosome. The clathrin lattice serves as a mechanical scaffold but is itself unable to bind directly to membrane components. Clathrin-associated adaptor protein (AP) complexes which can bind directly to both the clathrin lattice and to the lipid and protein components of membranes are considered to be the major clathrin adaptors contributing the CCV formation. AP-2 also serves as a cargo receptor to selectively sort the membrane proteins involved in receptor-mediated endocytosis. AP-2 seems to play a role in the recycling of synaptic vesicle membranes from the presynaptic surface. AP-2 recognizes Y-X-X-[FILMV] (Y-X-X-Phi) and [ED]-X-X-X-L-[LI] endocytosis signal motifs within the cytosolic tails of transmembrane cargo molecules. AP-2 may also play a role in maintaining normal post-endocytic trafficking through the ARF6-regulated, non-clathrin pathway. The AP-2 alpha and AP-2 sigma subunits are thought to contribute to the recognition of the [ED]-X-X-X-L-[LI] motif. May also play a role in extracellular calcium homeostasis (By similarity).</text>
</comment>
<comment type="subunit">
    <text evidence="2">Adaptor protein complex 2 (AP-2) is a heterotetramer composed of two large adaptins (alpha-type subunit AP2A1 or AP2A2 and beta-type subunit AP2B1), a medium adaptin (mu-type subunit AP2M1) and a small adaptin (sigma-type subunit AP2S1). Interacts with CCDC32; the interaction is direct and mediates association of CCDC32 with adaptor protein complex 2 (AP-2).</text>
</comment>
<comment type="subcellular location">
    <subcellularLocation>
        <location evidence="3">Cell membrane</location>
    </subcellularLocation>
    <subcellularLocation>
        <location evidence="2">Membrane</location>
        <location evidence="2">Coated pit</location>
        <topology evidence="2">Peripheral membrane protein</topology>
        <orientation evidence="2">Cytoplasmic side</orientation>
    </subcellularLocation>
    <text evidence="3">AP-2 appears to be excluded from internalizing CCVs and to disengage from sites of endocytosis seconds before internalization of the nascent CCV.</text>
</comment>
<comment type="similarity">
    <text evidence="4">Belongs to the adaptor complexes small subunit family.</text>
</comment>
<dbReference type="EMBL" id="CR859555">
    <property type="protein sequence ID" value="CAH91720.1"/>
    <property type="molecule type" value="mRNA"/>
</dbReference>
<dbReference type="RefSeq" id="NP_001125999.1">
    <property type="nucleotide sequence ID" value="NM_001132527.1"/>
</dbReference>
<dbReference type="SMR" id="Q5R940"/>
<dbReference type="FunCoup" id="Q5R940">
    <property type="interactions" value="2085"/>
</dbReference>
<dbReference type="STRING" id="9601.ENSPPYP00000011367"/>
<dbReference type="GeneID" id="100172940"/>
<dbReference type="KEGG" id="pon:100172940"/>
<dbReference type="CTD" id="1175"/>
<dbReference type="eggNOG" id="KOG0935">
    <property type="taxonomic scope" value="Eukaryota"/>
</dbReference>
<dbReference type="HOGENOM" id="CLU_061221_3_1_1"/>
<dbReference type="InParanoid" id="Q5R940"/>
<dbReference type="OrthoDB" id="371463at2759"/>
<dbReference type="TreeFam" id="TF300139"/>
<dbReference type="Proteomes" id="UP000001595">
    <property type="component" value="Chromosome 19"/>
</dbReference>
<dbReference type="GO" id="GO:0030122">
    <property type="term" value="C:AP-2 adaptor complex"/>
    <property type="evidence" value="ECO:0007669"/>
    <property type="project" value="InterPro"/>
</dbReference>
<dbReference type="GO" id="GO:0035615">
    <property type="term" value="F:clathrin adaptor activity"/>
    <property type="evidence" value="ECO:0007669"/>
    <property type="project" value="InterPro"/>
</dbReference>
<dbReference type="GO" id="GO:0072583">
    <property type="term" value="P:clathrin-dependent endocytosis"/>
    <property type="evidence" value="ECO:0007669"/>
    <property type="project" value="InterPro"/>
</dbReference>
<dbReference type="GO" id="GO:0006886">
    <property type="term" value="P:intracellular protein transport"/>
    <property type="evidence" value="ECO:0007669"/>
    <property type="project" value="InterPro"/>
</dbReference>
<dbReference type="CDD" id="cd14833">
    <property type="entry name" value="AP2_sigma"/>
    <property type="match status" value="1"/>
</dbReference>
<dbReference type="FunFam" id="3.30.450.60:FF:000004">
    <property type="entry name" value="AP complex subunit sigma"/>
    <property type="match status" value="1"/>
</dbReference>
<dbReference type="Gene3D" id="3.30.450.60">
    <property type="match status" value="1"/>
</dbReference>
<dbReference type="InterPro" id="IPR016635">
    <property type="entry name" value="AP_complex_ssu"/>
</dbReference>
<dbReference type="InterPro" id="IPR022775">
    <property type="entry name" value="AP_mu_sigma_su"/>
</dbReference>
<dbReference type="InterPro" id="IPR027156">
    <property type="entry name" value="APS2"/>
</dbReference>
<dbReference type="InterPro" id="IPR000804">
    <property type="entry name" value="Clathrin_sm-chain_CS"/>
</dbReference>
<dbReference type="InterPro" id="IPR011012">
    <property type="entry name" value="Longin-like_dom_sf"/>
</dbReference>
<dbReference type="PANTHER" id="PTHR11753">
    <property type="entry name" value="ADAPTOR COMPLEXES SMALL SUBUNIT FAMILY"/>
    <property type="match status" value="1"/>
</dbReference>
<dbReference type="Pfam" id="PF01217">
    <property type="entry name" value="Clat_adaptor_s"/>
    <property type="match status" value="1"/>
</dbReference>
<dbReference type="PIRSF" id="PIRSF015588">
    <property type="entry name" value="AP_complex_sigma"/>
    <property type="match status" value="1"/>
</dbReference>
<dbReference type="SUPFAM" id="SSF64356">
    <property type="entry name" value="SNARE-like"/>
    <property type="match status" value="1"/>
</dbReference>
<dbReference type="PROSITE" id="PS00989">
    <property type="entry name" value="CLAT_ADAPTOR_S"/>
    <property type="match status" value="1"/>
</dbReference>
<feature type="chain" id="PRO_0000193806" description="AP-2 complex subunit sigma">
    <location>
        <begin position="1"/>
        <end position="142"/>
    </location>
</feature>
<feature type="modified residue" description="Phosphoserine" evidence="2">
    <location>
        <position position="140"/>
    </location>
</feature>
<reference key="1">
    <citation type="submission" date="2004-11" db="EMBL/GenBank/DDBJ databases">
        <authorList>
            <consortium name="The German cDNA consortium"/>
        </authorList>
    </citation>
    <scope>NUCLEOTIDE SEQUENCE [LARGE SCALE MRNA]</scope>
    <source>
        <tissue>Heart</tissue>
    </source>
</reference>
<evidence type="ECO:0000250" key="1"/>
<evidence type="ECO:0000250" key="2">
    <source>
        <dbReference type="UniProtKB" id="P53680"/>
    </source>
</evidence>
<evidence type="ECO:0000250" key="3">
    <source>
        <dbReference type="UniProtKB" id="P63010"/>
    </source>
</evidence>
<evidence type="ECO:0000305" key="4"/>
<keyword id="KW-1003">Cell membrane</keyword>
<keyword id="KW-0168">Coated pit</keyword>
<keyword id="KW-0254">Endocytosis</keyword>
<keyword id="KW-0472">Membrane</keyword>
<keyword id="KW-0597">Phosphoprotein</keyword>
<keyword id="KW-0653">Protein transport</keyword>
<keyword id="KW-1185">Reference proteome</keyword>
<keyword id="KW-0813">Transport</keyword>
<proteinExistence type="evidence at transcript level"/>
<protein>
    <recommendedName>
        <fullName>AP-2 complex subunit sigma</fullName>
    </recommendedName>
    <alternativeName>
        <fullName>Adaptor protein complex AP-2 subunit sigma</fullName>
    </alternativeName>
    <alternativeName>
        <fullName>Adaptor-related protein complex 2 subunit sigma</fullName>
    </alternativeName>
    <alternativeName>
        <fullName>Clathrin assembly protein 2 sigma small chain</fullName>
    </alternativeName>
    <alternativeName>
        <fullName>Clathrin coat assembly protein AP17</fullName>
    </alternativeName>
    <alternativeName>
        <fullName>Clathrin coat-associated protein AP17</fullName>
    </alternativeName>
    <alternativeName>
        <fullName>Plasma membrane adaptor AP-2 17 kDa protein</fullName>
    </alternativeName>
    <alternativeName>
        <fullName>Sigma-adaptin 3b</fullName>
    </alternativeName>
    <alternativeName>
        <fullName>Sigma2-adaptin</fullName>
    </alternativeName>
</protein>
<organism>
    <name type="scientific">Pongo abelii</name>
    <name type="common">Sumatran orangutan</name>
    <name type="synonym">Pongo pygmaeus abelii</name>
    <dbReference type="NCBI Taxonomy" id="9601"/>
    <lineage>
        <taxon>Eukaryota</taxon>
        <taxon>Metazoa</taxon>
        <taxon>Chordata</taxon>
        <taxon>Craniata</taxon>
        <taxon>Vertebrata</taxon>
        <taxon>Euteleostomi</taxon>
        <taxon>Mammalia</taxon>
        <taxon>Eutheria</taxon>
        <taxon>Euarchontoglires</taxon>
        <taxon>Primates</taxon>
        <taxon>Haplorrhini</taxon>
        <taxon>Catarrhini</taxon>
        <taxon>Hominidae</taxon>
        <taxon>Pongo</taxon>
    </lineage>
</organism>